<name>NANM_HAEI8</name>
<comment type="function">
    <text evidence="1">Converts alpha-N-acetylneuranimic acid (Neu5Ac) to the beta-anomer, accelerating the equilibrium between the alpha- and beta-anomers. Probably facilitates sialidase-negative bacteria to compete successfully for limited amounts of extracellular Neu5Ac, which is likely taken up in the beta-anomer. In addition, the rapid removal of sialic acid from solution might be advantageous to the bacterium to damp down host responses.</text>
</comment>
<comment type="catalytic activity">
    <reaction evidence="1">
        <text>N-acetyl-alpha-neuraminate = N-acetyl-beta-neuraminate</text>
        <dbReference type="Rhea" id="RHEA:25233"/>
        <dbReference type="ChEBI" id="CHEBI:58705"/>
        <dbReference type="ChEBI" id="CHEBI:58770"/>
        <dbReference type="EC" id="5.1.3.24"/>
    </reaction>
</comment>
<comment type="subunit">
    <text evidence="1">Homodimer.</text>
</comment>
<comment type="subcellular location">
    <subcellularLocation>
        <location evidence="1">Periplasm</location>
    </subcellularLocation>
</comment>
<comment type="similarity">
    <text evidence="1">Belongs to the NanM family.</text>
</comment>
<comment type="sequence caution" evidence="2">
    <conflict type="erroneous initiation">
        <sequence resource="EMBL-CDS" id="AAX87208"/>
    </conflict>
</comment>
<accession>Q4QP39</accession>
<protein>
    <recommendedName>
        <fullName evidence="1">N-acetylneuraminate epimerase</fullName>
        <ecNumber evidence="1">5.1.3.24</ecNumber>
    </recommendedName>
    <alternativeName>
        <fullName evidence="1">N-acetylneuraminate mutarotase</fullName>
        <shortName evidence="1">Neu5Ac mutarotase</shortName>
    </alternativeName>
    <alternativeName>
        <fullName evidence="1">Sialic acid epimerase</fullName>
    </alternativeName>
</protein>
<dbReference type="EC" id="5.1.3.24" evidence="1"/>
<dbReference type="EMBL" id="CP000057">
    <property type="protein sequence ID" value="AAX87208.1"/>
    <property type="status" value="ALT_INIT"/>
    <property type="molecule type" value="Genomic_DNA"/>
</dbReference>
<dbReference type="RefSeq" id="WP_041174728.1">
    <property type="nucleotide sequence ID" value="NC_007146.2"/>
</dbReference>
<dbReference type="SMR" id="Q4QP39"/>
<dbReference type="KEGG" id="hit:NTHI0235"/>
<dbReference type="HOGENOM" id="CLU_061535_0_0_6"/>
<dbReference type="Proteomes" id="UP000002525">
    <property type="component" value="Chromosome"/>
</dbReference>
<dbReference type="GO" id="GO:0042597">
    <property type="term" value="C:periplasmic space"/>
    <property type="evidence" value="ECO:0007669"/>
    <property type="project" value="UniProtKB-SubCell"/>
</dbReference>
<dbReference type="GO" id="GO:0016857">
    <property type="term" value="F:racemase and epimerase activity, acting on carbohydrates and derivatives"/>
    <property type="evidence" value="ECO:0007669"/>
    <property type="project" value="UniProtKB-UniRule"/>
</dbReference>
<dbReference type="Gene3D" id="2.120.10.80">
    <property type="entry name" value="Kelch-type beta propeller"/>
    <property type="match status" value="2"/>
</dbReference>
<dbReference type="HAMAP" id="MF_01195">
    <property type="entry name" value="NanM"/>
    <property type="match status" value="1"/>
</dbReference>
<dbReference type="InterPro" id="IPR015915">
    <property type="entry name" value="Kelch-typ_b-propeller"/>
</dbReference>
<dbReference type="InterPro" id="IPR056734">
    <property type="entry name" value="NANM"/>
</dbReference>
<dbReference type="InterPro" id="IPR019936">
    <property type="entry name" value="NanM_proteobact"/>
</dbReference>
<dbReference type="NCBIfam" id="TIGR03547">
    <property type="entry name" value="muta_rot_YjhT"/>
    <property type="match status" value="1"/>
</dbReference>
<dbReference type="NCBIfam" id="NF010730">
    <property type="entry name" value="PRK14131.1"/>
    <property type="match status" value="1"/>
</dbReference>
<dbReference type="PANTHER" id="PTHR45632">
    <property type="entry name" value="LD33804P"/>
    <property type="match status" value="1"/>
</dbReference>
<dbReference type="Pfam" id="PF24996">
    <property type="entry name" value="NANM"/>
    <property type="match status" value="1"/>
</dbReference>
<dbReference type="SUPFAM" id="SSF117281">
    <property type="entry name" value="Kelch motif"/>
    <property type="match status" value="1"/>
</dbReference>
<gene>
    <name evidence="1" type="primary">nanM</name>
    <name type="ordered locus">NTHI0235</name>
</gene>
<sequence>MKLTKTALCTALFATFTFSANAQTYPDLPVGIKGGTGALIGDTVYVGLGSGGDKFYTLDLKDPSAQWKEIATFPGGERNQPVAAAVDGKLYVFGGLQKNEKGELQLVNDAYRYNPSDNTWMKLPTRSPRGLVGSSGASHGDKVYILGGSNLSIFNGFFQDNVAAGEDKGKKDEIVAAYFDQRPEDYFFTTELLSYEPSTNKWRNEGRIPFSGRAGAAFTIQGNDLVVVNGEIKPGLRTAETHQGKFTAKGVQWKNLPDLPAPKGKSQDGLAGALAGYSNGYYLVTGGANFPGSIKQFKEGKLHAHKGLSKAWHNEVYTLNNGKWSIVGELPMNIGYGFSVSYNNKVLLIGGETDGGKALTSVKAISYDGKKLTVE</sequence>
<organism>
    <name type="scientific">Haemophilus influenzae (strain 86-028NP)</name>
    <dbReference type="NCBI Taxonomy" id="281310"/>
    <lineage>
        <taxon>Bacteria</taxon>
        <taxon>Pseudomonadati</taxon>
        <taxon>Pseudomonadota</taxon>
        <taxon>Gammaproteobacteria</taxon>
        <taxon>Pasteurellales</taxon>
        <taxon>Pasteurellaceae</taxon>
        <taxon>Haemophilus</taxon>
    </lineage>
</organism>
<feature type="signal peptide" evidence="1">
    <location>
        <begin position="1"/>
        <end position="22"/>
    </location>
</feature>
<feature type="chain" id="PRO_0000333061" description="N-acetylneuraminate epimerase">
    <location>
        <begin position="23"/>
        <end position="375"/>
    </location>
</feature>
<feature type="repeat" description="Kelch 1">
    <location>
        <begin position="43"/>
        <end position="87"/>
    </location>
</feature>
<feature type="repeat" description="Kelch 2">
    <location>
        <begin position="89"/>
        <end position="140"/>
    </location>
</feature>
<feature type="repeat" description="Kelch 3">
    <location>
        <begin position="142"/>
        <end position="176"/>
    </location>
</feature>
<feature type="repeat" description="Kelch 4">
    <location>
        <begin position="177"/>
        <end position="222"/>
    </location>
</feature>
<feature type="repeat" description="Kelch 5">
    <location>
        <begin position="225"/>
        <end position="273"/>
    </location>
</feature>
<feature type="repeat" description="Kelch 6">
    <location>
        <begin position="295"/>
        <end position="344"/>
    </location>
</feature>
<feature type="repeat" description="Kelch 7">
    <location>
        <begin position="346"/>
        <end position="375"/>
    </location>
</feature>
<feature type="active site" description="Proton acceptor" evidence="1">
    <location>
        <position position="231"/>
    </location>
</feature>
<reference key="1">
    <citation type="journal article" date="2005" name="J. Bacteriol.">
        <title>Genomic sequence of an otitis media isolate of nontypeable Haemophilus influenzae: comparative study with H. influenzae serotype d, strain KW20.</title>
        <authorList>
            <person name="Harrison A."/>
            <person name="Dyer D.W."/>
            <person name="Gillaspy A."/>
            <person name="Ray W.C."/>
            <person name="Mungur R."/>
            <person name="Carson M.B."/>
            <person name="Zhong H."/>
            <person name="Gipson J."/>
            <person name="Gipson M."/>
            <person name="Johnson L.S."/>
            <person name="Lewis L."/>
            <person name="Bakaletz L.O."/>
            <person name="Munson R.S. Jr."/>
        </authorList>
    </citation>
    <scope>NUCLEOTIDE SEQUENCE [LARGE SCALE GENOMIC DNA]</scope>
    <source>
        <strain>86-028NP</strain>
    </source>
</reference>
<proteinExistence type="inferred from homology"/>
<evidence type="ECO:0000255" key="1">
    <source>
        <dbReference type="HAMAP-Rule" id="MF_01195"/>
    </source>
</evidence>
<evidence type="ECO:0000305" key="2"/>
<keyword id="KW-0119">Carbohydrate metabolism</keyword>
<keyword id="KW-0413">Isomerase</keyword>
<keyword id="KW-0880">Kelch repeat</keyword>
<keyword id="KW-0574">Periplasm</keyword>
<keyword id="KW-0677">Repeat</keyword>
<keyword id="KW-0732">Signal</keyword>